<sequence length="100" mass="11117">MIPLSHGLILAFFLFSLGFVSLVMHKNILFMLISLEIMINSAALALVVVGNYWNQVDGQIMYILILTLGASESSIGLALLIQCYRHFKTLNIDKLSEMNG</sequence>
<proteinExistence type="inferred from homology"/>
<feature type="chain" id="PRO_0000118530" description="NADH-quinone oxidoreductase subunit K">
    <location>
        <begin position="1"/>
        <end position="100"/>
    </location>
</feature>
<feature type="transmembrane region" description="Helical" evidence="1">
    <location>
        <begin position="4"/>
        <end position="24"/>
    </location>
</feature>
<feature type="transmembrane region" description="Helical" evidence="1">
    <location>
        <begin position="28"/>
        <end position="48"/>
    </location>
</feature>
<feature type="transmembrane region" description="Helical" evidence="1">
    <location>
        <begin position="60"/>
        <end position="80"/>
    </location>
</feature>
<keyword id="KW-1003">Cell membrane</keyword>
<keyword id="KW-0472">Membrane</keyword>
<keyword id="KW-0520">NAD</keyword>
<keyword id="KW-0874">Quinone</keyword>
<keyword id="KW-1185">Reference proteome</keyword>
<keyword id="KW-1278">Translocase</keyword>
<keyword id="KW-0812">Transmembrane</keyword>
<keyword id="KW-1133">Transmembrane helix</keyword>
<keyword id="KW-0813">Transport</keyword>
<keyword id="KW-0830">Ubiquinone</keyword>
<dbReference type="EC" id="7.1.1.-" evidence="1"/>
<dbReference type="EMBL" id="AE016826">
    <property type="protein sequence ID" value="AAO26886.1"/>
    <property type="molecule type" value="Genomic_DNA"/>
</dbReference>
<dbReference type="RefSeq" id="WP_011091287.1">
    <property type="nucleotide sequence ID" value="NC_004545.1"/>
</dbReference>
<dbReference type="SMR" id="Q89AT7"/>
<dbReference type="STRING" id="224915.bbp_152"/>
<dbReference type="KEGG" id="bab:bbp_152"/>
<dbReference type="eggNOG" id="COG0713">
    <property type="taxonomic scope" value="Bacteria"/>
</dbReference>
<dbReference type="HOGENOM" id="CLU_144724_0_1_6"/>
<dbReference type="OrthoDB" id="9801357at2"/>
<dbReference type="Proteomes" id="UP000000601">
    <property type="component" value="Chromosome"/>
</dbReference>
<dbReference type="GO" id="GO:0030964">
    <property type="term" value="C:NADH dehydrogenase complex"/>
    <property type="evidence" value="ECO:0007669"/>
    <property type="project" value="TreeGrafter"/>
</dbReference>
<dbReference type="GO" id="GO:0005886">
    <property type="term" value="C:plasma membrane"/>
    <property type="evidence" value="ECO:0007669"/>
    <property type="project" value="UniProtKB-SubCell"/>
</dbReference>
<dbReference type="GO" id="GO:0050136">
    <property type="term" value="F:NADH:ubiquinone reductase (non-electrogenic) activity"/>
    <property type="evidence" value="ECO:0007669"/>
    <property type="project" value="UniProtKB-UniRule"/>
</dbReference>
<dbReference type="GO" id="GO:0048038">
    <property type="term" value="F:quinone binding"/>
    <property type="evidence" value="ECO:0007669"/>
    <property type="project" value="UniProtKB-KW"/>
</dbReference>
<dbReference type="GO" id="GO:0042773">
    <property type="term" value="P:ATP synthesis coupled electron transport"/>
    <property type="evidence" value="ECO:0007669"/>
    <property type="project" value="InterPro"/>
</dbReference>
<dbReference type="FunFam" id="1.10.287.3510:FF:000001">
    <property type="entry name" value="NADH-quinone oxidoreductase subunit K"/>
    <property type="match status" value="1"/>
</dbReference>
<dbReference type="Gene3D" id="1.10.287.3510">
    <property type="match status" value="1"/>
</dbReference>
<dbReference type="HAMAP" id="MF_01456">
    <property type="entry name" value="NDH1_NuoK"/>
    <property type="match status" value="1"/>
</dbReference>
<dbReference type="InterPro" id="IPR001133">
    <property type="entry name" value="NADH_UbQ_OxRdtase_chain4L/K"/>
</dbReference>
<dbReference type="InterPro" id="IPR039428">
    <property type="entry name" value="NUOK/Mnh_C1-like"/>
</dbReference>
<dbReference type="NCBIfam" id="NF004319">
    <property type="entry name" value="PRK05715.1-1"/>
    <property type="match status" value="1"/>
</dbReference>
<dbReference type="NCBIfam" id="NF004320">
    <property type="entry name" value="PRK05715.1-2"/>
    <property type="match status" value="1"/>
</dbReference>
<dbReference type="PANTHER" id="PTHR11434:SF16">
    <property type="entry name" value="NADH-UBIQUINONE OXIDOREDUCTASE CHAIN 4L"/>
    <property type="match status" value="1"/>
</dbReference>
<dbReference type="PANTHER" id="PTHR11434">
    <property type="entry name" value="NADH-UBIQUINONE OXIDOREDUCTASE SUBUNIT ND4L"/>
    <property type="match status" value="1"/>
</dbReference>
<dbReference type="Pfam" id="PF00420">
    <property type="entry name" value="Oxidored_q2"/>
    <property type="match status" value="1"/>
</dbReference>
<reference key="1">
    <citation type="journal article" date="2003" name="Proc. Natl. Acad. Sci. U.S.A.">
        <title>Reductive genome evolution in Buchnera aphidicola.</title>
        <authorList>
            <person name="van Ham R.C.H.J."/>
            <person name="Kamerbeek J."/>
            <person name="Palacios C."/>
            <person name="Rausell C."/>
            <person name="Abascal F."/>
            <person name="Bastolla U."/>
            <person name="Fernandez J.M."/>
            <person name="Jimenez L."/>
            <person name="Postigo M."/>
            <person name="Silva F.J."/>
            <person name="Tamames J."/>
            <person name="Viguera E."/>
            <person name="Latorre A."/>
            <person name="Valencia A."/>
            <person name="Moran F."/>
            <person name="Moya A."/>
        </authorList>
    </citation>
    <scope>NUCLEOTIDE SEQUENCE [LARGE SCALE GENOMIC DNA]</scope>
    <source>
        <strain>Bp</strain>
    </source>
</reference>
<name>NUOK_BUCBP</name>
<comment type="function">
    <text evidence="1">NDH-1 shuttles electrons from NADH, via FMN and iron-sulfur (Fe-S) centers, to quinones in the respiratory chain. The immediate electron acceptor for the enzyme in this species is believed to be ubiquinone. Couples the redox reaction to proton translocation (for every two electrons transferred, four hydrogen ions are translocated across the cytoplasmic membrane), and thus conserves the redox energy in a proton gradient.</text>
</comment>
<comment type="catalytic activity">
    <reaction evidence="1">
        <text>a quinone + NADH + 5 H(+)(in) = a quinol + NAD(+) + 4 H(+)(out)</text>
        <dbReference type="Rhea" id="RHEA:57888"/>
        <dbReference type="ChEBI" id="CHEBI:15378"/>
        <dbReference type="ChEBI" id="CHEBI:24646"/>
        <dbReference type="ChEBI" id="CHEBI:57540"/>
        <dbReference type="ChEBI" id="CHEBI:57945"/>
        <dbReference type="ChEBI" id="CHEBI:132124"/>
    </reaction>
</comment>
<comment type="subunit">
    <text evidence="1">NDH-1 is composed of 13 different subunits. Subunits NuoA, H, J, K, L, M, N constitute the membrane sector of the complex.</text>
</comment>
<comment type="subcellular location">
    <subcellularLocation>
        <location evidence="1">Cell membrane</location>
        <topology evidence="1">Multi-pass membrane protein</topology>
    </subcellularLocation>
</comment>
<comment type="similarity">
    <text evidence="1">Belongs to the complex I subunit 4L family.</text>
</comment>
<accession>Q89AT7</accession>
<gene>
    <name evidence="1" type="primary">nuoK</name>
    <name type="ordered locus">bbp_152</name>
</gene>
<organism>
    <name type="scientific">Buchnera aphidicola subsp. Baizongia pistaciae (strain Bp)</name>
    <dbReference type="NCBI Taxonomy" id="224915"/>
    <lineage>
        <taxon>Bacteria</taxon>
        <taxon>Pseudomonadati</taxon>
        <taxon>Pseudomonadota</taxon>
        <taxon>Gammaproteobacteria</taxon>
        <taxon>Enterobacterales</taxon>
        <taxon>Erwiniaceae</taxon>
        <taxon>Buchnera</taxon>
    </lineage>
</organism>
<evidence type="ECO:0000255" key="1">
    <source>
        <dbReference type="HAMAP-Rule" id="MF_01456"/>
    </source>
</evidence>
<protein>
    <recommendedName>
        <fullName evidence="1">NADH-quinone oxidoreductase subunit K</fullName>
        <ecNumber evidence="1">7.1.1.-</ecNumber>
    </recommendedName>
    <alternativeName>
        <fullName evidence="1">NADH dehydrogenase I subunit K</fullName>
    </alternativeName>
    <alternativeName>
        <fullName evidence="1">NDH-1 subunit K</fullName>
    </alternativeName>
</protein>